<dbReference type="EC" id="4.1.1.23" evidence="1"/>
<dbReference type="EMBL" id="CP001089">
    <property type="protein sequence ID" value="ACD95582.1"/>
    <property type="molecule type" value="Genomic_DNA"/>
</dbReference>
<dbReference type="RefSeq" id="WP_012469921.1">
    <property type="nucleotide sequence ID" value="NC_010814.1"/>
</dbReference>
<dbReference type="SMR" id="B3E1T2"/>
<dbReference type="STRING" id="398767.Glov_1866"/>
<dbReference type="KEGG" id="glo:Glov_1866"/>
<dbReference type="eggNOG" id="COG0284">
    <property type="taxonomic scope" value="Bacteria"/>
</dbReference>
<dbReference type="HOGENOM" id="CLU_067069_0_0_7"/>
<dbReference type="OrthoDB" id="9806203at2"/>
<dbReference type="UniPathway" id="UPA00070">
    <property type="reaction ID" value="UER00120"/>
</dbReference>
<dbReference type="Proteomes" id="UP000002420">
    <property type="component" value="Chromosome"/>
</dbReference>
<dbReference type="GO" id="GO:0005829">
    <property type="term" value="C:cytosol"/>
    <property type="evidence" value="ECO:0007669"/>
    <property type="project" value="TreeGrafter"/>
</dbReference>
<dbReference type="GO" id="GO:0004590">
    <property type="term" value="F:orotidine-5'-phosphate decarboxylase activity"/>
    <property type="evidence" value="ECO:0007669"/>
    <property type="project" value="UniProtKB-UniRule"/>
</dbReference>
<dbReference type="GO" id="GO:0006207">
    <property type="term" value="P:'de novo' pyrimidine nucleobase biosynthetic process"/>
    <property type="evidence" value="ECO:0007669"/>
    <property type="project" value="InterPro"/>
</dbReference>
<dbReference type="GO" id="GO:0044205">
    <property type="term" value="P:'de novo' UMP biosynthetic process"/>
    <property type="evidence" value="ECO:0007669"/>
    <property type="project" value="UniProtKB-UniRule"/>
</dbReference>
<dbReference type="CDD" id="cd04725">
    <property type="entry name" value="OMP_decarboxylase_like"/>
    <property type="match status" value="1"/>
</dbReference>
<dbReference type="FunFam" id="3.20.20.70:FF:000015">
    <property type="entry name" value="Orotidine 5'-phosphate decarboxylase"/>
    <property type="match status" value="1"/>
</dbReference>
<dbReference type="Gene3D" id="3.20.20.70">
    <property type="entry name" value="Aldolase class I"/>
    <property type="match status" value="1"/>
</dbReference>
<dbReference type="HAMAP" id="MF_01200_B">
    <property type="entry name" value="OMPdecase_type1_B"/>
    <property type="match status" value="1"/>
</dbReference>
<dbReference type="InterPro" id="IPR013785">
    <property type="entry name" value="Aldolase_TIM"/>
</dbReference>
<dbReference type="InterPro" id="IPR014732">
    <property type="entry name" value="OMPdecase"/>
</dbReference>
<dbReference type="InterPro" id="IPR018089">
    <property type="entry name" value="OMPdecase_AS"/>
</dbReference>
<dbReference type="InterPro" id="IPR047596">
    <property type="entry name" value="OMPdecase_bac"/>
</dbReference>
<dbReference type="InterPro" id="IPR001754">
    <property type="entry name" value="OMPdeCOase_dom"/>
</dbReference>
<dbReference type="InterPro" id="IPR011060">
    <property type="entry name" value="RibuloseP-bd_barrel"/>
</dbReference>
<dbReference type="NCBIfam" id="NF001273">
    <property type="entry name" value="PRK00230.1"/>
    <property type="match status" value="1"/>
</dbReference>
<dbReference type="NCBIfam" id="TIGR01740">
    <property type="entry name" value="pyrF"/>
    <property type="match status" value="1"/>
</dbReference>
<dbReference type="PANTHER" id="PTHR32119">
    <property type="entry name" value="OROTIDINE 5'-PHOSPHATE DECARBOXYLASE"/>
    <property type="match status" value="1"/>
</dbReference>
<dbReference type="PANTHER" id="PTHR32119:SF2">
    <property type="entry name" value="OROTIDINE 5'-PHOSPHATE DECARBOXYLASE"/>
    <property type="match status" value="1"/>
</dbReference>
<dbReference type="Pfam" id="PF00215">
    <property type="entry name" value="OMPdecase"/>
    <property type="match status" value="1"/>
</dbReference>
<dbReference type="SMART" id="SM00934">
    <property type="entry name" value="OMPdecase"/>
    <property type="match status" value="1"/>
</dbReference>
<dbReference type="SUPFAM" id="SSF51366">
    <property type="entry name" value="Ribulose-phoshate binding barrel"/>
    <property type="match status" value="1"/>
</dbReference>
<dbReference type="PROSITE" id="PS00156">
    <property type="entry name" value="OMPDECASE"/>
    <property type="match status" value="1"/>
</dbReference>
<sequence length="241" mass="25821">MTRDEAKNKIIFALDVDNLKDIDCWAEKLSRKVGMFKVGKELFTSAGPAAVEAVKKHAGEVFLDLKYHDIPNTVAQAMLAAGRLGVKLANLHALGGPEMMEKASQAVRKEFSENERPRLLAVTILTSSTQDTLKAVGIEHPVEEMVVRLAKLAKESGMDGVVASPLEIEAIRAACGPDFLIVTPGVRPSFAAVDDQKRIMTPAEAVKAGADYLVIGRPIAKAADPIQAAELIVDEIVAGVQ</sequence>
<reference key="1">
    <citation type="submission" date="2008-05" db="EMBL/GenBank/DDBJ databases">
        <title>Complete sequence of chromosome of Geobacter lovleyi SZ.</title>
        <authorList>
            <consortium name="US DOE Joint Genome Institute"/>
            <person name="Lucas S."/>
            <person name="Copeland A."/>
            <person name="Lapidus A."/>
            <person name="Glavina del Rio T."/>
            <person name="Dalin E."/>
            <person name="Tice H."/>
            <person name="Bruce D."/>
            <person name="Goodwin L."/>
            <person name="Pitluck S."/>
            <person name="Chertkov O."/>
            <person name="Meincke L."/>
            <person name="Brettin T."/>
            <person name="Detter J.C."/>
            <person name="Han C."/>
            <person name="Tapia R."/>
            <person name="Kuske C.R."/>
            <person name="Schmutz J."/>
            <person name="Larimer F."/>
            <person name="Land M."/>
            <person name="Hauser L."/>
            <person name="Kyrpides N."/>
            <person name="Mikhailova N."/>
            <person name="Sung Y."/>
            <person name="Fletcher K.E."/>
            <person name="Ritalahti K.M."/>
            <person name="Loeffler F.E."/>
            <person name="Richardson P."/>
        </authorList>
    </citation>
    <scope>NUCLEOTIDE SEQUENCE [LARGE SCALE GENOMIC DNA]</scope>
    <source>
        <strain>ATCC BAA-1151 / DSM 17278 / SZ</strain>
    </source>
</reference>
<keyword id="KW-0210">Decarboxylase</keyword>
<keyword id="KW-0456">Lyase</keyword>
<keyword id="KW-0665">Pyrimidine biosynthesis</keyword>
<keyword id="KW-1185">Reference proteome</keyword>
<organism>
    <name type="scientific">Trichlorobacter lovleyi (strain ATCC BAA-1151 / DSM 17278 / SZ)</name>
    <name type="common">Geobacter lovleyi</name>
    <dbReference type="NCBI Taxonomy" id="398767"/>
    <lineage>
        <taxon>Bacteria</taxon>
        <taxon>Pseudomonadati</taxon>
        <taxon>Thermodesulfobacteriota</taxon>
        <taxon>Desulfuromonadia</taxon>
        <taxon>Geobacterales</taxon>
        <taxon>Geobacteraceae</taxon>
        <taxon>Trichlorobacter</taxon>
    </lineage>
</organism>
<proteinExistence type="inferred from homology"/>
<protein>
    <recommendedName>
        <fullName evidence="1">Orotidine 5'-phosphate decarboxylase</fullName>
        <ecNumber evidence="1">4.1.1.23</ecNumber>
    </recommendedName>
    <alternativeName>
        <fullName evidence="1">OMP decarboxylase</fullName>
        <shortName evidence="1">OMPDCase</shortName>
        <shortName evidence="1">OMPdecase</shortName>
    </alternativeName>
</protein>
<evidence type="ECO:0000255" key="1">
    <source>
        <dbReference type="HAMAP-Rule" id="MF_01200"/>
    </source>
</evidence>
<name>PYRF_TRIL1</name>
<comment type="function">
    <text evidence="1">Catalyzes the decarboxylation of orotidine 5'-monophosphate (OMP) to uridine 5'-monophosphate (UMP).</text>
</comment>
<comment type="catalytic activity">
    <reaction evidence="1">
        <text>orotidine 5'-phosphate + H(+) = UMP + CO2</text>
        <dbReference type="Rhea" id="RHEA:11596"/>
        <dbReference type="ChEBI" id="CHEBI:15378"/>
        <dbReference type="ChEBI" id="CHEBI:16526"/>
        <dbReference type="ChEBI" id="CHEBI:57538"/>
        <dbReference type="ChEBI" id="CHEBI:57865"/>
        <dbReference type="EC" id="4.1.1.23"/>
    </reaction>
</comment>
<comment type="pathway">
    <text evidence="1">Pyrimidine metabolism; UMP biosynthesis via de novo pathway; UMP from orotate: step 2/2.</text>
</comment>
<comment type="subunit">
    <text evidence="1">Homodimer.</text>
</comment>
<comment type="similarity">
    <text evidence="1">Belongs to the OMP decarboxylase family. Type 1 subfamily.</text>
</comment>
<gene>
    <name evidence="1" type="primary">pyrF</name>
    <name type="ordered locus">Glov_1866</name>
</gene>
<accession>B3E1T2</accession>
<feature type="chain" id="PRO_1000138531" description="Orotidine 5'-phosphate decarboxylase">
    <location>
        <begin position="1"/>
        <end position="241"/>
    </location>
</feature>
<feature type="active site" description="Proton donor" evidence="1">
    <location>
        <position position="66"/>
    </location>
</feature>
<feature type="binding site" evidence="1">
    <location>
        <position position="15"/>
    </location>
    <ligand>
        <name>substrate</name>
    </ligand>
</feature>
<feature type="binding site" evidence="1">
    <location>
        <position position="37"/>
    </location>
    <ligand>
        <name>substrate</name>
    </ligand>
</feature>
<feature type="binding site" evidence="1">
    <location>
        <begin position="64"/>
        <end position="73"/>
    </location>
    <ligand>
        <name>substrate</name>
    </ligand>
</feature>
<feature type="binding site" evidence="1">
    <location>
        <position position="126"/>
    </location>
    <ligand>
        <name>substrate</name>
    </ligand>
</feature>
<feature type="binding site" evidence="1">
    <location>
        <position position="187"/>
    </location>
    <ligand>
        <name>substrate</name>
    </ligand>
</feature>
<feature type="binding site" evidence="1">
    <location>
        <position position="196"/>
    </location>
    <ligand>
        <name>substrate</name>
    </ligand>
</feature>
<feature type="binding site" evidence="1">
    <location>
        <position position="216"/>
    </location>
    <ligand>
        <name>substrate</name>
    </ligand>
</feature>
<feature type="binding site" evidence="1">
    <location>
        <position position="217"/>
    </location>
    <ligand>
        <name>substrate</name>
    </ligand>
</feature>